<sequence length="339" mass="38368">MIFIDACFRKETPYTPIWMMRQAGRYLSEYQESRKKAGSFLELCKNSDLATEVTLQPVEILGVDAAILFSDILVVPLEMGLNLEFIPKKGPHFLETITDLKSVESLKVGVYKQLNYVYDTISQTRQKLSKEKALIGFCGSPWTLATYMIEGEGSKSYAKSKKMLYSEPEVLKALLEKLSLELIEYLSLQIQAGVNAVMIFDSWASALEKEAYLEFSWDYLKKISKELKKRYAHIPVILFPKGIGAYLDSIDGEFDVFGVDWGTPLTAAKKILGGKYVLQGNLEPTRLYDKNALEEGVEKILKVMGNQGHIFNLGHGMLPDLPRENAKYLVQLVHAKTRR</sequence>
<proteinExistence type="inferred from homology"/>
<keyword id="KW-0963">Cytoplasm</keyword>
<keyword id="KW-0210">Decarboxylase</keyword>
<keyword id="KW-0456">Lyase</keyword>
<keyword id="KW-0627">Porphyrin biosynthesis</keyword>
<accession>Q9ZLM8</accession>
<feature type="chain" id="PRO_0000187609" description="Uroporphyrinogen decarboxylase">
    <location>
        <begin position="1"/>
        <end position="339"/>
    </location>
</feature>
<feature type="binding site" evidence="1">
    <location>
        <begin position="21"/>
        <end position="25"/>
    </location>
    <ligand>
        <name>substrate</name>
    </ligand>
</feature>
<feature type="binding site" evidence="1">
    <location>
        <position position="40"/>
    </location>
    <ligand>
        <name>substrate</name>
    </ligand>
</feature>
<feature type="binding site" evidence="1">
    <location>
        <position position="71"/>
    </location>
    <ligand>
        <name>substrate</name>
    </ligand>
</feature>
<feature type="binding site" evidence="1">
    <location>
        <position position="147"/>
    </location>
    <ligand>
        <name>substrate</name>
    </ligand>
</feature>
<feature type="binding site" evidence="1">
    <location>
        <position position="202"/>
    </location>
    <ligand>
        <name>substrate</name>
    </ligand>
</feature>
<feature type="binding site" evidence="1">
    <location>
        <position position="315"/>
    </location>
    <ligand>
        <name>substrate</name>
    </ligand>
</feature>
<feature type="site" description="Transition state stabilizer" evidence="1">
    <location>
        <position position="71"/>
    </location>
</feature>
<gene>
    <name evidence="1" type="primary">hemE</name>
    <name type="ordered locus">jhp_0551</name>
</gene>
<comment type="function">
    <text evidence="1">Catalyzes the decarboxylation of four acetate groups of uroporphyrinogen-III to yield coproporphyrinogen-III.</text>
</comment>
<comment type="catalytic activity">
    <reaction evidence="1">
        <text>uroporphyrinogen III + 4 H(+) = coproporphyrinogen III + 4 CO2</text>
        <dbReference type="Rhea" id="RHEA:19865"/>
        <dbReference type="ChEBI" id="CHEBI:15378"/>
        <dbReference type="ChEBI" id="CHEBI:16526"/>
        <dbReference type="ChEBI" id="CHEBI:57308"/>
        <dbReference type="ChEBI" id="CHEBI:57309"/>
        <dbReference type="EC" id="4.1.1.37"/>
    </reaction>
</comment>
<comment type="pathway">
    <text evidence="1">Porphyrin-containing compound metabolism; protoporphyrin-IX biosynthesis; coproporphyrinogen-III from 5-aminolevulinate: step 4/4.</text>
</comment>
<comment type="subunit">
    <text evidence="1">Homodimer.</text>
</comment>
<comment type="subcellular location">
    <subcellularLocation>
        <location evidence="1">Cytoplasm</location>
    </subcellularLocation>
</comment>
<comment type="similarity">
    <text evidence="1">Belongs to the uroporphyrinogen decarboxylase family.</text>
</comment>
<organism>
    <name type="scientific">Helicobacter pylori (strain J99 / ATCC 700824)</name>
    <name type="common">Campylobacter pylori J99</name>
    <dbReference type="NCBI Taxonomy" id="85963"/>
    <lineage>
        <taxon>Bacteria</taxon>
        <taxon>Pseudomonadati</taxon>
        <taxon>Campylobacterota</taxon>
        <taxon>Epsilonproteobacteria</taxon>
        <taxon>Campylobacterales</taxon>
        <taxon>Helicobacteraceae</taxon>
        <taxon>Helicobacter</taxon>
    </lineage>
</organism>
<name>DCUP_HELPJ</name>
<dbReference type="EC" id="4.1.1.37" evidence="1"/>
<dbReference type="EMBL" id="AE001439">
    <property type="protein sequence ID" value="AAD06123.1"/>
    <property type="molecule type" value="Genomic_DNA"/>
</dbReference>
<dbReference type="PIR" id="E71918">
    <property type="entry name" value="E71918"/>
</dbReference>
<dbReference type="RefSeq" id="WP_010882530.1">
    <property type="nucleotide sequence ID" value="NC_000921.1"/>
</dbReference>
<dbReference type="SMR" id="Q9ZLM8"/>
<dbReference type="KEGG" id="hpj:jhp_0551"/>
<dbReference type="PATRIC" id="fig|85963.30.peg.442"/>
<dbReference type="eggNOG" id="COG0407">
    <property type="taxonomic scope" value="Bacteria"/>
</dbReference>
<dbReference type="UniPathway" id="UPA00251">
    <property type="reaction ID" value="UER00321"/>
</dbReference>
<dbReference type="Proteomes" id="UP000000804">
    <property type="component" value="Chromosome"/>
</dbReference>
<dbReference type="GO" id="GO:0005829">
    <property type="term" value="C:cytosol"/>
    <property type="evidence" value="ECO:0007669"/>
    <property type="project" value="TreeGrafter"/>
</dbReference>
<dbReference type="GO" id="GO:0004853">
    <property type="term" value="F:uroporphyrinogen decarboxylase activity"/>
    <property type="evidence" value="ECO:0007669"/>
    <property type="project" value="UniProtKB-UniRule"/>
</dbReference>
<dbReference type="GO" id="GO:0019353">
    <property type="term" value="P:protoporphyrinogen IX biosynthetic process from glutamate"/>
    <property type="evidence" value="ECO:0007669"/>
    <property type="project" value="TreeGrafter"/>
</dbReference>
<dbReference type="CDD" id="cd00717">
    <property type="entry name" value="URO-D"/>
    <property type="match status" value="1"/>
</dbReference>
<dbReference type="FunFam" id="3.20.20.210:FF:000007">
    <property type="entry name" value="Uroporphyrinogen decarboxylase"/>
    <property type="match status" value="1"/>
</dbReference>
<dbReference type="Gene3D" id="3.20.20.210">
    <property type="match status" value="1"/>
</dbReference>
<dbReference type="HAMAP" id="MF_00218">
    <property type="entry name" value="URO_D"/>
    <property type="match status" value="1"/>
</dbReference>
<dbReference type="InterPro" id="IPR038071">
    <property type="entry name" value="UROD/MetE-like_sf"/>
</dbReference>
<dbReference type="InterPro" id="IPR006361">
    <property type="entry name" value="Uroporphyrinogen_deCO2ase_HemE"/>
</dbReference>
<dbReference type="InterPro" id="IPR000257">
    <property type="entry name" value="Uroporphyrinogen_deCOase"/>
</dbReference>
<dbReference type="NCBIfam" id="TIGR01464">
    <property type="entry name" value="hemE"/>
    <property type="match status" value="1"/>
</dbReference>
<dbReference type="PANTHER" id="PTHR21091">
    <property type="entry name" value="METHYLTETRAHYDROFOLATE:HOMOCYSTEINE METHYLTRANSFERASE RELATED"/>
    <property type="match status" value="1"/>
</dbReference>
<dbReference type="PANTHER" id="PTHR21091:SF169">
    <property type="entry name" value="UROPORPHYRINOGEN DECARBOXYLASE"/>
    <property type="match status" value="1"/>
</dbReference>
<dbReference type="Pfam" id="PF01208">
    <property type="entry name" value="URO-D"/>
    <property type="match status" value="1"/>
</dbReference>
<dbReference type="SUPFAM" id="SSF51726">
    <property type="entry name" value="UROD/MetE-like"/>
    <property type="match status" value="1"/>
</dbReference>
<dbReference type="PROSITE" id="PS00906">
    <property type="entry name" value="UROD_1"/>
    <property type="match status" value="1"/>
</dbReference>
<dbReference type="PROSITE" id="PS00907">
    <property type="entry name" value="UROD_2"/>
    <property type="match status" value="1"/>
</dbReference>
<evidence type="ECO:0000255" key="1">
    <source>
        <dbReference type="HAMAP-Rule" id="MF_00218"/>
    </source>
</evidence>
<protein>
    <recommendedName>
        <fullName evidence="1">Uroporphyrinogen decarboxylase</fullName>
        <shortName evidence="1">UPD</shortName>
        <shortName evidence="1">URO-D</shortName>
        <ecNumber evidence="1">4.1.1.37</ecNumber>
    </recommendedName>
</protein>
<reference key="1">
    <citation type="journal article" date="1999" name="Nature">
        <title>Genomic sequence comparison of two unrelated isolates of the human gastric pathogen Helicobacter pylori.</title>
        <authorList>
            <person name="Alm R.A."/>
            <person name="Ling L.-S.L."/>
            <person name="Moir D.T."/>
            <person name="King B.L."/>
            <person name="Brown E.D."/>
            <person name="Doig P.C."/>
            <person name="Smith D.R."/>
            <person name="Noonan B."/>
            <person name="Guild B.C."/>
            <person name="deJonge B.L."/>
            <person name="Carmel G."/>
            <person name="Tummino P.J."/>
            <person name="Caruso A."/>
            <person name="Uria-Nickelsen M."/>
            <person name="Mills D.M."/>
            <person name="Ives C."/>
            <person name="Gibson R."/>
            <person name="Merberg D."/>
            <person name="Mills S.D."/>
            <person name="Jiang Q."/>
            <person name="Taylor D.E."/>
            <person name="Vovis G.F."/>
            <person name="Trust T.J."/>
        </authorList>
    </citation>
    <scope>NUCLEOTIDE SEQUENCE [LARGE SCALE GENOMIC DNA]</scope>
    <source>
        <strain>J99 / ATCC 700824</strain>
    </source>
</reference>